<feature type="chain" id="PRO_0000321602" description="Dihydroxy-acid dehydratase">
    <location>
        <begin position="1"/>
        <end position="564"/>
    </location>
</feature>
<feature type="active site" description="Proton acceptor" evidence="1">
    <location>
        <position position="478"/>
    </location>
</feature>
<feature type="binding site" evidence="1">
    <location>
        <position position="55"/>
    </location>
    <ligand>
        <name>[2Fe-2S] cluster</name>
        <dbReference type="ChEBI" id="CHEBI:190135"/>
    </ligand>
</feature>
<feature type="binding site" evidence="1">
    <location>
        <position position="87"/>
    </location>
    <ligand>
        <name>Mg(2+)</name>
        <dbReference type="ChEBI" id="CHEBI:18420"/>
    </ligand>
</feature>
<feature type="binding site" evidence="1">
    <location>
        <position position="128"/>
    </location>
    <ligand>
        <name>[2Fe-2S] cluster</name>
        <dbReference type="ChEBI" id="CHEBI:190135"/>
    </ligand>
</feature>
<feature type="binding site" evidence="1">
    <location>
        <position position="129"/>
    </location>
    <ligand>
        <name>Mg(2+)</name>
        <dbReference type="ChEBI" id="CHEBI:18420"/>
    </ligand>
</feature>
<feature type="binding site" description="via carbamate group" evidence="1">
    <location>
        <position position="130"/>
    </location>
    <ligand>
        <name>Mg(2+)</name>
        <dbReference type="ChEBI" id="CHEBI:18420"/>
    </ligand>
</feature>
<feature type="binding site" evidence="1">
    <location>
        <position position="200"/>
    </location>
    <ligand>
        <name>[2Fe-2S] cluster</name>
        <dbReference type="ChEBI" id="CHEBI:190135"/>
    </ligand>
</feature>
<feature type="binding site" evidence="1">
    <location>
        <position position="452"/>
    </location>
    <ligand>
        <name>Mg(2+)</name>
        <dbReference type="ChEBI" id="CHEBI:18420"/>
    </ligand>
</feature>
<feature type="modified residue" description="N6-carboxylysine" evidence="1">
    <location>
        <position position="130"/>
    </location>
</feature>
<comment type="function">
    <text evidence="1">Functions in the biosynthesis of branched-chain amino acids. Catalyzes the dehydration of (2R,3R)-2,3-dihydroxy-3-methylpentanoate (2,3-dihydroxy-3-methylvalerate) into 2-oxo-3-methylpentanoate (2-oxo-3-methylvalerate) and of (2R)-2,3-dihydroxy-3-methylbutanoate (2,3-dihydroxyisovalerate) into 2-oxo-3-methylbutanoate (2-oxoisovalerate), the penultimate precursor to L-isoleucine and L-valine, respectively.</text>
</comment>
<comment type="catalytic activity">
    <reaction evidence="1">
        <text>(2R)-2,3-dihydroxy-3-methylbutanoate = 3-methyl-2-oxobutanoate + H2O</text>
        <dbReference type="Rhea" id="RHEA:24809"/>
        <dbReference type="ChEBI" id="CHEBI:11851"/>
        <dbReference type="ChEBI" id="CHEBI:15377"/>
        <dbReference type="ChEBI" id="CHEBI:49072"/>
        <dbReference type="EC" id="4.2.1.9"/>
    </reaction>
    <physiologicalReaction direction="left-to-right" evidence="1">
        <dbReference type="Rhea" id="RHEA:24810"/>
    </physiologicalReaction>
</comment>
<comment type="catalytic activity">
    <reaction evidence="1">
        <text>(2R,3R)-2,3-dihydroxy-3-methylpentanoate = (S)-3-methyl-2-oxopentanoate + H2O</text>
        <dbReference type="Rhea" id="RHEA:27694"/>
        <dbReference type="ChEBI" id="CHEBI:15377"/>
        <dbReference type="ChEBI" id="CHEBI:35146"/>
        <dbReference type="ChEBI" id="CHEBI:49258"/>
        <dbReference type="EC" id="4.2.1.9"/>
    </reaction>
    <physiologicalReaction direction="left-to-right" evidence="1">
        <dbReference type="Rhea" id="RHEA:27695"/>
    </physiologicalReaction>
</comment>
<comment type="cofactor">
    <cofactor evidence="1">
        <name>[2Fe-2S] cluster</name>
        <dbReference type="ChEBI" id="CHEBI:190135"/>
    </cofactor>
    <text evidence="1">Binds 1 [2Fe-2S] cluster per subunit. This cluster acts as a Lewis acid cofactor.</text>
</comment>
<comment type="cofactor">
    <cofactor evidence="1">
        <name>Mg(2+)</name>
        <dbReference type="ChEBI" id="CHEBI:18420"/>
    </cofactor>
</comment>
<comment type="pathway">
    <text evidence="1">Amino-acid biosynthesis; L-isoleucine biosynthesis; L-isoleucine from 2-oxobutanoate: step 3/4.</text>
</comment>
<comment type="pathway">
    <text evidence="1">Amino-acid biosynthesis; L-valine biosynthesis; L-valine from pyruvate: step 3/4.</text>
</comment>
<comment type="subunit">
    <text evidence="1">Homodimer.</text>
</comment>
<comment type="similarity">
    <text evidence="1">Belongs to the IlvD/Edd family.</text>
</comment>
<sequence length="564" mass="59343">METKTIQLNPRSKNITEGKSRAPNRSMYYAMGYEEADFKKPMIGVANGHSTITPCNSGLQKLADAAIAGIEEAGGNAQVFGTPTISDGMAMGTEGMKYSLVSREVISDCIETCVQGQWMDGVLVIGGCDKNMPGGLMGMLRANVPAIYVYGGTILPGSYKGKDLNIVSVFEAVGENAAGRMSDEDLLQIERRAIPGTGSCGGMYTANTMSSAFEALGISLPYSSTMANPHDEKMNSARESAKVLVEAIKKDIKPRDLVTKKAIENAVAVIMATGGSTNAVLHFLAIAHAAGVDWTIDDFERVRQRTPVLCDLKPSGKYLAVDLHRAGGIPQVMKMLLAAGLLHGDCLTITGQTIAEVLKDVPEAPRADQDVIRPISNPMYAQGHLAILKGNLSPEGCVAKITGLKNPVMTGPARVFDDEQSALAAILAGKIKAGDVMVLRYLGPKGGPGMPEMLAPTGALIGAGLGESVGLITDGRFSGGTWGMVVGHVAPEAAAGGNIAFINEGDSITIDSKQLLLQLNISDAELEKRKVGWKAPAPRYNRGVQAKFAFNASSASKGAVLDDY</sequence>
<dbReference type="EC" id="4.2.1.9" evidence="1"/>
<dbReference type="EMBL" id="CP000316">
    <property type="protein sequence ID" value="ABE43982.1"/>
    <property type="molecule type" value="Genomic_DNA"/>
</dbReference>
<dbReference type="RefSeq" id="WP_011482981.1">
    <property type="nucleotide sequence ID" value="NC_007948.1"/>
</dbReference>
<dbReference type="SMR" id="Q12BW0"/>
<dbReference type="STRING" id="296591.Bpro_2052"/>
<dbReference type="KEGG" id="pol:Bpro_2052"/>
<dbReference type="eggNOG" id="COG0129">
    <property type="taxonomic scope" value="Bacteria"/>
</dbReference>
<dbReference type="HOGENOM" id="CLU_014271_4_2_4"/>
<dbReference type="OrthoDB" id="9807077at2"/>
<dbReference type="UniPathway" id="UPA00047">
    <property type="reaction ID" value="UER00057"/>
</dbReference>
<dbReference type="UniPathway" id="UPA00049">
    <property type="reaction ID" value="UER00061"/>
</dbReference>
<dbReference type="Proteomes" id="UP000001983">
    <property type="component" value="Chromosome"/>
</dbReference>
<dbReference type="GO" id="GO:0051537">
    <property type="term" value="F:2 iron, 2 sulfur cluster binding"/>
    <property type="evidence" value="ECO:0007669"/>
    <property type="project" value="UniProtKB-UniRule"/>
</dbReference>
<dbReference type="GO" id="GO:0004160">
    <property type="term" value="F:dihydroxy-acid dehydratase activity"/>
    <property type="evidence" value="ECO:0007669"/>
    <property type="project" value="UniProtKB-UniRule"/>
</dbReference>
<dbReference type="GO" id="GO:0000287">
    <property type="term" value="F:magnesium ion binding"/>
    <property type="evidence" value="ECO:0007669"/>
    <property type="project" value="UniProtKB-UniRule"/>
</dbReference>
<dbReference type="GO" id="GO:0009097">
    <property type="term" value="P:isoleucine biosynthetic process"/>
    <property type="evidence" value="ECO:0007669"/>
    <property type="project" value="UniProtKB-UniRule"/>
</dbReference>
<dbReference type="GO" id="GO:0009099">
    <property type="term" value="P:L-valine biosynthetic process"/>
    <property type="evidence" value="ECO:0007669"/>
    <property type="project" value="UniProtKB-UniRule"/>
</dbReference>
<dbReference type="FunFam" id="3.50.30.80:FF:000001">
    <property type="entry name" value="Dihydroxy-acid dehydratase"/>
    <property type="match status" value="1"/>
</dbReference>
<dbReference type="Gene3D" id="3.50.30.80">
    <property type="entry name" value="IlvD/EDD C-terminal domain-like"/>
    <property type="match status" value="1"/>
</dbReference>
<dbReference type="HAMAP" id="MF_00012">
    <property type="entry name" value="IlvD"/>
    <property type="match status" value="1"/>
</dbReference>
<dbReference type="InterPro" id="IPR050165">
    <property type="entry name" value="DHAD_IlvD/Edd"/>
</dbReference>
<dbReference type="InterPro" id="IPR042096">
    <property type="entry name" value="Dihydro-acid_dehy_C"/>
</dbReference>
<dbReference type="InterPro" id="IPR004404">
    <property type="entry name" value="DihydroxyA_deHydtase"/>
</dbReference>
<dbReference type="InterPro" id="IPR020558">
    <property type="entry name" value="DiOHA_6PGluconate_deHydtase_CS"/>
</dbReference>
<dbReference type="InterPro" id="IPR056740">
    <property type="entry name" value="ILV_EDD_C"/>
</dbReference>
<dbReference type="InterPro" id="IPR000581">
    <property type="entry name" value="ILV_EDD_N"/>
</dbReference>
<dbReference type="InterPro" id="IPR037237">
    <property type="entry name" value="IlvD/EDD_N"/>
</dbReference>
<dbReference type="NCBIfam" id="TIGR00110">
    <property type="entry name" value="ilvD"/>
    <property type="match status" value="1"/>
</dbReference>
<dbReference type="NCBIfam" id="NF002068">
    <property type="entry name" value="PRK00911.1"/>
    <property type="match status" value="1"/>
</dbReference>
<dbReference type="PANTHER" id="PTHR21000">
    <property type="entry name" value="DIHYDROXY-ACID DEHYDRATASE DAD"/>
    <property type="match status" value="1"/>
</dbReference>
<dbReference type="PANTHER" id="PTHR21000:SF5">
    <property type="entry name" value="DIHYDROXY-ACID DEHYDRATASE, MITOCHONDRIAL"/>
    <property type="match status" value="1"/>
</dbReference>
<dbReference type="Pfam" id="PF24877">
    <property type="entry name" value="ILV_EDD_C"/>
    <property type="match status" value="1"/>
</dbReference>
<dbReference type="Pfam" id="PF00920">
    <property type="entry name" value="ILVD_EDD_N"/>
    <property type="match status" value="1"/>
</dbReference>
<dbReference type="SUPFAM" id="SSF143975">
    <property type="entry name" value="IlvD/EDD N-terminal domain-like"/>
    <property type="match status" value="1"/>
</dbReference>
<dbReference type="SUPFAM" id="SSF52016">
    <property type="entry name" value="LeuD/IlvD-like"/>
    <property type="match status" value="1"/>
</dbReference>
<dbReference type="PROSITE" id="PS00886">
    <property type="entry name" value="ILVD_EDD_1"/>
    <property type="match status" value="1"/>
</dbReference>
<dbReference type="PROSITE" id="PS00887">
    <property type="entry name" value="ILVD_EDD_2"/>
    <property type="match status" value="1"/>
</dbReference>
<evidence type="ECO:0000255" key="1">
    <source>
        <dbReference type="HAMAP-Rule" id="MF_00012"/>
    </source>
</evidence>
<reference key="1">
    <citation type="journal article" date="2008" name="Appl. Environ. Microbiol.">
        <title>The genome of Polaromonas sp. strain JS666: insights into the evolution of a hydrocarbon- and xenobiotic-degrading bacterium, and features of relevance to biotechnology.</title>
        <authorList>
            <person name="Mattes T.E."/>
            <person name="Alexander A.K."/>
            <person name="Richardson P.M."/>
            <person name="Munk A.C."/>
            <person name="Han C.S."/>
            <person name="Stothard P."/>
            <person name="Coleman N.V."/>
        </authorList>
    </citation>
    <scope>NUCLEOTIDE SEQUENCE [LARGE SCALE GENOMIC DNA]</scope>
    <source>
        <strain>JS666 / ATCC BAA-500</strain>
    </source>
</reference>
<organism>
    <name type="scientific">Polaromonas sp. (strain JS666 / ATCC BAA-500)</name>
    <dbReference type="NCBI Taxonomy" id="296591"/>
    <lineage>
        <taxon>Bacteria</taxon>
        <taxon>Pseudomonadati</taxon>
        <taxon>Pseudomonadota</taxon>
        <taxon>Betaproteobacteria</taxon>
        <taxon>Burkholderiales</taxon>
        <taxon>Comamonadaceae</taxon>
        <taxon>Polaromonas</taxon>
    </lineage>
</organism>
<name>ILVD_POLSJ</name>
<proteinExistence type="inferred from homology"/>
<gene>
    <name evidence="1" type="primary">ilvD</name>
    <name type="ordered locus">Bpro_2052</name>
</gene>
<accession>Q12BW0</accession>
<keyword id="KW-0001">2Fe-2S</keyword>
<keyword id="KW-0028">Amino-acid biosynthesis</keyword>
<keyword id="KW-0100">Branched-chain amino acid biosynthesis</keyword>
<keyword id="KW-0408">Iron</keyword>
<keyword id="KW-0411">Iron-sulfur</keyword>
<keyword id="KW-0456">Lyase</keyword>
<keyword id="KW-0460">Magnesium</keyword>
<keyword id="KW-0479">Metal-binding</keyword>
<keyword id="KW-1185">Reference proteome</keyword>
<protein>
    <recommendedName>
        <fullName evidence="1">Dihydroxy-acid dehydratase</fullName>
        <shortName evidence="1">DAD</shortName>
        <ecNumber evidence="1">4.2.1.9</ecNumber>
    </recommendedName>
</protein>